<accession>B7J1U9</accession>
<proteinExistence type="inferred from homology"/>
<comment type="function">
    <text evidence="1">Involved in the synthesis of autoinducer 2 (AI-2) which is secreted by bacteria and is used to communicate both the cell density and the metabolic potential of the environment. The regulation of gene expression in response to changes in cell density is called quorum sensing. Catalyzes the transformation of S-ribosylhomocysteine (RHC) to homocysteine (HC) and 4,5-dihydroxy-2,3-pentadione (DPD).</text>
</comment>
<comment type="catalytic activity">
    <reaction evidence="1">
        <text>S-(5-deoxy-D-ribos-5-yl)-L-homocysteine = (S)-4,5-dihydroxypentane-2,3-dione + L-homocysteine</text>
        <dbReference type="Rhea" id="RHEA:17753"/>
        <dbReference type="ChEBI" id="CHEBI:29484"/>
        <dbReference type="ChEBI" id="CHEBI:58195"/>
        <dbReference type="ChEBI" id="CHEBI:58199"/>
        <dbReference type="EC" id="4.4.1.21"/>
    </reaction>
</comment>
<comment type="cofactor">
    <cofactor evidence="1">
        <name>Fe cation</name>
        <dbReference type="ChEBI" id="CHEBI:24875"/>
    </cofactor>
    <text evidence="1">Binds 1 Fe cation per subunit.</text>
</comment>
<comment type="subunit">
    <text evidence="1">Homodimer.</text>
</comment>
<comment type="similarity">
    <text evidence="1">Belongs to the LuxS family.</text>
</comment>
<protein>
    <recommendedName>
        <fullName evidence="1">S-ribosylhomocysteine lyase</fullName>
        <ecNumber evidence="1">4.4.1.21</ecNumber>
    </recommendedName>
    <alternativeName>
        <fullName evidence="1">AI-2 synthesis protein</fullName>
    </alternativeName>
    <alternativeName>
        <fullName evidence="1">Autoinducer-2 production protein LuxS</fullName>
    </alternativeName>
</protein>
<reference key="1">
    <citation type="journal article" date="2011" name="J. Bacteriol.">
        <title>Whole-genome sequences of thirteen isolates of Borrelia burgdorferi.</title>
        <authorList>
            <person name="Schutzer S.E."/>
            <person name="Fraser-Liggett C.M."/>
            <person name="Casjens S.R."/>
            <person name="Qiu W.G."/>
            <person name="Dunn J.J."/>
            <person name="Mongodin E.F."/>
            <person name="Luft B.J."/>
        </authorList>
    </citation>
    <scope>NUCLEOTIDE SEQUENCE [LARGE SCALE GENOMIC DNA]</scope>
    <source>
        <strain>ZS7</strain>
    </source>
</reference>
<name>LUXS_BORBZ</name>
<sequence length="157" mass="18098">MKKITSFTIDHTKLNPGIYVSRKDTFENVIFTTIDIRIKAPNIEPIIENAAIHTIEHIGATLLRNNEVWTEKIVYFGPMGCRTGFYLIIFGDYESKDLVDLVSWLFSEIVNFSEPIPGASDKECGNYKEHNLDMAKYESSKYLQILNNIKEENLKYP</sequence>
<evidence type="ECO:0000255" key="1">
    <source>
        <dbReference type="HAMAP-Rule" id="MF_00091"/>
    </source>
</evidence>
<keyword id="KW-0071">Autoinducer synthesis</keyword>
<keyword id="KW-0408">Iron</keyword>
<keyword id="KW-0456">Lyase</keyword>
<keyword id="KW-0479">Metal-binding</keyword>
<keyword id="KW-0673">Quorum sensing</keyword>
<feature type="chain" id="PRO_1000117216" description="S-ribosylhomocysteine lyase">
    <location>
        <begin position="1"/>
        <end position="157"/>
    </location>
</feature>
<feature type="binding site" evidence="1">
    <location>
        <position position="53"/>
    </location>
    <ligand>
        <name>Fe cation</name>
        <dbReference type="ChEBI" id="CHEBI:24875"/>
    </ligand>
</feature>
<feature type="binding site" evidence="1">
    <location>
        <position position="57"/>
    </location>
    <ligand>
        <name>Fe cation</name>
        <dbReference type="ChEBI" id="CHEBI:24875"/>
    </ligand>
</feature>
<feature type="binding site" evidence="1">
    <location>
        <position position="124"/>
    </location>
    <ligand>
        <name>Fe cation</name>
        <dbReference type="ChEBI" id="CHEBI:24875"/>
    </ligand>
</feature>
<dbReference type="EC" id="4.4.1.21" evidence="1"/>
<dbReference type="EMBL" id="CP001205">
    <property type="protein sequence ID" value="ACK74841.1"/>
    <property type="molecule type" value="Genomic_DNA"/>
</dbReference>
<dbReference type="RefSeq" id="WP_002656744.1">
    <property type="nucleotide sequence ID" value="NC_011728.1"/>
</dbReference>
<dbReference type="SMR" id="B7J1U9"/>
<dbReference type="KEGG" id="bbz:BbuZS7_0379"/>
<dbReference type="HOGENOM" id="CLU_107531_1_0_12"/>
<dbReference type="Proteomes" id="UP000006901">
    <property type="component" value="Chromosome"/>
</dbReference>
<dbReference type="GO" id="GO:0005506">
    <property type="term" value="F:iron ion binding"/>
    <property type="evidence" value="ECO:0007669"/>
    <property type="project" value="InterPro"/>
</dbReference>
<dbReference type="GO" id="GO:0043768">
    <property type="term" value="F:S-ribosylhomocysteine lyase activity"/>
    <property type="evidence" value="ECO:0007669"/>
    <property type="project" value="UniProtKB-UniRule"/>
</dbReference>
<dbReference type="GO" id="GO:0009372">
    <property type="term" value="P:quorum sensing"/>
    <property type="evidence" value="ECO:0007669"/>
    <property type="project" value="UniProtKB-UniRule"/>
</dbReference>
<dbReference type="Gene3D" id="3.30.1360.80">
    <property type="entry name" value="S-ribosylhomocysteinase (LuxS)"/>
    <property type="match status" value="1"/>
</dbReference>
<dbReference type="HAMAP" id="MF_00091">
    <property type="entry name" value="LuxS"/>
    <property type="match status" value="1"/>
</dbReference>
<dbReference type="InterPro" id="IPR037005">
    <property type="entry name" value="LuxS_sf"/>
</dbReference>
<dbReference type="InterPro" id="IPR011249">
    <property type="entry name" value="Metalloenz_LuxS/M16"/>
</dbReference>
<dbReference type="InterPro" id="IPR003815">
    <property type="entry name" value="S-ribosylhomocysteinase"/>
</dbReference>
<dbReference type="NCBIfam" id="NF002604">
    <property type="entry name" value="PRK02260.1-4"/>
    <property type="match status" value="1"/>
</dbReference>
<dbReference type="PANTHER" id="PTHR35799">
    <property type="entry name" value="S-RIBOSYLHOMOCYSTEINE LYASE"/>
    <property type="match status" value="1"/>
</dbReference>
<dbReference type="PANTHER" id="PTHR35799:SF1">
    <property type="entry name" value="S-RIBOSYLHOMOCYSTEINE LYASE"/>
    <property type="match status" value="1"/>
</dbReference>
<dbReference type="Pfam" id="PF02664">
    <property type="entry name" value="LuxS"/>
    <property type="match status" value="1"/>
</dbReference>
<dbReference type="PIRSF" id="PIRSF006160">
    <property type="entry name" value="AI2"/>
    <property type="match status" value="1"/>
</dbReference>
<dbReference type="PRINTS" id="PR01487">
    <property type="entry name" value="LUXSPROTEIN"/>
</dbReference>
<dbReference type="SUPFAM" id="SSF63411">
    <property type="entry name" value="LuxS/MPP-like metallohydrolase"/>
    <property type="match status" value="1"/>
</dbReference>
<organism>
    <name type="scientific">Borreliella burgdorferi (strain ZS7)</name>
    <name type="common">Borrelia burgdorferi</name>
    <dbReference type="NCBI Taxonomy" id="445985"/>
    <lineage>
        <taxon>Bacteria</taxon>
        <taxon>Pseudomonadati</taxon>
        <taxon>Spirochaetota</taxon>
        <taxon>Spirochaetia</taxon>
        <taxon>Spirochaetales</taxon>
        <taxon>Borreliaceae</taxon>
        <taxon>Borreliella</taxon>
    </lineage>
</organism>
<gene>
    <name evidence="1" type="primary">luxS</name>
    <name type="ordered locus">BbuZS7_0379</name>
</gene>